<name>PCS1_LOTJA</name>
<reference key="1">
    <citation type="journal article" date="2006" name="Plant Physiol.">
        <title>A reassessment of substrate specificity and activation of phytochelatin synthases from model plants by physiologically relevant metals.</title>
        <authorList>
            <person name="Loscos J."/>
            <person name="Naya L."/>
            <person name="Ramos J."/>
            <person name="Clemente M.R."/>
            <person name="Matamoros M.A."/>
            <person name="Becana M."/>
        </authorList>
    </citation>
    <scope>NUCLEOTIDE SEQUENCE [MRNA]</scope>
    <scope>ACTIVITY REGULATION</scope>
    <source>
        <tissue>Root</tissue>
    </source>
</reference>
<reference key="2">
    <citation type="journal article" date="2007" name="Plant Physiol.">
        <title>Phytochelatin synthases of the model legume Lotus japonicus. A small multigene family with differential response to cadmium and alternatively spliced variants.</title>
        <authorList>
            <person name="Ramos J."/>
            <person name="Clemente M.R."/>
            <person name="Naya L."/>
            <person name="Loscos J."/>
            <person name="Perez-Rontome C."/>
            <person name="Sato S."/>
            <person name="Tabata S."/>
            <person name="Becana M."/>
        </authorList>
    </citation>
    <scope>NUCLEOTIDE SEQUENCE [GENOMIC DNA]</scope>
    <scope>FUNCTION</scope>
    <scope>TISSUE SPECIFICITY</scope>
    <scope>INDUCTION</scope>
    <source>
        <strain>cv. Miyakojima MG-20</strain>
    </source>
</reference>
<sequence length="501" mass="55520">MAMAGLYRRLLPSPPAVDFASSQGKQLFLEAVQNGTMESFYRLVSYFQTQSEPAFCGLASLSMVLNALAIDPGRKWKGPWRWFDESMLDCCEPLDKIKARGISFGKLVCLAHCAGAKVEAFHASHSSIDHFRKYVMKCSTSDDCHVISSYHREALKQTGTGHFSPIGGYHAGKDMALILDVARFKYPPHWIPLTHLWEGMNYVDESTGKTRGFMLISRPHREPGMLYTLSCKHESWNSIAKFLIDDIPFLLTSEDVKDICKVLSVIVTSLPSNFEEFIKWVAEIRRGEDGSPSLSVEEKARLSVKEEILKQVQRTGLFKHVASFLSHSCSGHTPTSGDRDTFPVIAASVCCQGAEILGGKISSSAEYCCRETCMKCWKAEDDKPIRMVCGTVVNGNTEQGVDVLIPSSCGKLSCTCSSTTKSIRKHPASTDVLTVLLLSLPTSTWAGIADEKLLSEIHDLVSIENLPALLQEEVLHLRRQLHILKRCQEGKVDEDLGVPLS</sequence>
<feature type="chain" id="PRO_0000287213" description="Glutathione gamma-glutamylcysteinyltransferase 1">
    <location>
        <begin position="1"/>
        <end position="501"/>
    </location>
</feature>
<feature type="domain" description="Peptidase C83" evidence="1">
    <location>
        <begin position="1"/>
        <end position="221"/>
    </location>
</feature>
<feature type="active site" evidence="1">
    <location>
        <position position="56"/>
    </location>
</feature>
<feature type="active site" evidence="1">
    <location>
        <position position="162"/>
    </location>
</feature>
<feature type="active site" evidence="1">
    <location>
        <position position="180"/>
    </location>
</feature>
<protein>
    <recommendedName>
        <fullName>Glutathione gamma-glutamylcysteinyltransferase 1</fullName>
        <ecNumber>2.3.2.15</ecNumber>
    </recommendedName>
    <alternativeName>
        <fullName>LjPCS1-8R</fullName>
    </alternativeName>
    <alternativeName>
        <fullName>Phytochelatin synthase 1</fullName>
    </alternativeName>
</protein>
<dbReference type="EC" id="2.3.2.15"/>
<dbReference type="EMBL" id="AY633847">
    <property type="protein sequence ID" value="AAT80342.1"/>
    <property type="molecule type" value="mRNA"/>
</dbReference>
<dbReference type="EMBL" id="AY270030">
    <property type="protein sequence ID" value="AAQ01752.1"/>
    <property type="molecule type" value="Genomic_DNA"/>
</dbReference>
<dbReference type="SMR" id="Q2TSC7"/>
<dbReference type="BioCyc" id="MetaCyc:MONOMER-16320"/>
<dbReference type="BRENDA" id="2.3.2.15">
    <property type="organism ID" value="3076"/>
</dbReference>
<dbReference type="GO" id="GO:0016756">
    <property type="term" value="F:glutathione gamma-glutamylcysteinyltransferase activity"/>
    <property type="evidence" value="ECO:0007669"/>
    <property type="project" value="UniProtKB-EC"/>
</dbReference>
<dbReference type="GO" id="GO:0046872">
    <property type="term" value="F:metal ion binding"/>
    <property type="evidence" value="ECO:0007669"/>
    <property type="project" value="UniProtKB-KW"/>
</dbReference>
<dbReference type="GO" id="GO:0098849">
    <property type="term" value="P:cellular detoxification of cadmium ion"/>
    <property type="evidence" value="ECO:0007669"/>
    <property type="project" value="TreeGrafter"/>
</dbReference>
<dbReference type="GO" id="GO:0010273">
    <property type="term" value="P:detoxification of copper ion"/>
    <property type="evidence" value="ECO:0007669"/>
    <property type="project" value="TreeGrafter"/>
</dbReference>
<dbReference type="GO" id="GO:0046938">
    <property type="term" value="P:phytochelatin biosynthetic process"/>
    <property type="evidence" value="ECO:0007669"/>
    <property type="project" value="InterPro"/>
</dbReference>
<dbReference type="FunFam" id="3.90.70.30:FF:000001">
    <property type="entry name" value="Glutathione gamma-glutamylcysteinyltransferase 1"/>
    <property type="match status" value="1"/>
</dbReference>
<dbReference type="Gene3D" id="3.90.70.30">
    <property type="entry name" value="Phytochelatin synthase, N-terminal domain"/>
    <property type="match status" value="1"/>
</dbReference>
<dbReference type="InterPro" id="IPR038765">
    <property type="entry name" value="Papain-like_cys_pep_sf"/>
</dbReference>
<dbReference type="InterPro" id="IPR040409">
    <property type="entry name" value="PCS-like"/>
</dbReference>
<dbReference type="InterPro" id="IPR007719">
    <property type="entry name" value="PCS_N"/>
</dbReference>
<dbReference type="InterPro" id="IPR038156">
    <property type="entry name" value="PCS_N_sf"/>
</dbReference>
<dbReference type="InterPro" id="IPR015407">
    <property type="entry name" value="Phytochelatin_synthase_C"/>
</dbReference>
<dbReference type="PANTHER" id="PTHR33447">
    <property type="entry name" value="GLUTATHIONE GAMMA-GLUTAMYLCYSTEINYLTRANSFERASE"/>
    <property type="match status" value="1"/>
</dbReference>
<dbReference type="PANTHER" id="PTHR33447:SF2">
    <property type="entry name" value="GLUTATHIONE GAMMA-GLUTAMYLCYSTEINYLTRANSFERASE"/>
    <property type="match status" value="1"/>
</dbReference>
<dbReference type="Pfam" id="PF05023">
    <property type="entry name" value="Phytochelatin"/>
    <property type="match status" value="1"/>
</dbReference>
<dbReference type="Pfam" id="PF09328">
    <property type="entry name" value="Phytochelatin_C"/>
    <property type="match status" value="1"/>
</dbReference>
<dbReference type="SUPFAM" id="SSF54001">
    <property type="entry name" value="Cysteine proteinases"/>
    <property type="match status" value="1"/>
</dbReference>
<dbReference type="PROSITE" id="PS51443">
    <property type="entry name" value="PCS"/>
    <property type="match status" value="1"/>
</dbReference>
<proteinExistence type="evidence at transcript level"/>
<accession>Q2TSC7</accession>
<evidence type="ECO:0000255" key="1">
    <source>
        <dbReference type="PROSITE-ProRule" id="PRU00773"/>
    </source>
</evidence>
<evidence type="ECO:0000269" key="2">
    <source>
    </source>
</evidence>
<evidence type="ECO:0000269" key="3">
    <source>
    </source>
</evidence>
<comment type="function">
    <text evidence="3">Involved in the synthesis of phytochelatins (PC) and homophytochelatins (hPC), the heavy-metal-binding peptides of plants.</text>
</comment>
<comment type="catalytic activity">
    <reaction evidence="1">
        <text>[Glu(-Cys)](n)-Gly + glutathione + H(+) = [Glu(-Cys)](n+1)-Gly + glycine</text>
        <dbReference type="Rhea" id="RHEA:17917"/>
        <dbReference type="Rhea" id="RHEA-COMP:12438"/>
        <dbReference type="Rhea" id="RHEA-COMP:12439"/>
        <dbReference type="ChEBI" id="CHEBI:15378"/>
        <dbReference type="ChEBI" id="CHEBI:57305"/>
        <dbReference type="ChEBI" id="CHEBI:57925"/>
        <dbReference type="ChEBI" id="CHEBI:131728"/>
        <dbReference type="EC" id="2.3.2.15"/>
    </reaction>
</comment>
<comment type="activity regulation">
    <text evidence="2">Requires cadmium for activity. Also activated in vitro by Zn(2+), Cu(2+), Fe(2+) or Fe(3+) ions, but not by Co(2+) or Ni(2+) ions.</text>
</comment>
<comment type="tissue specificity">
    <text evidence="3">Expressed in roots, nodules and leaves.</text>
</comment>
<comment type="induction">
    <text evidence="3">By cadmium.</text>
</comment>
<comment type="miscellaneous">
    <text>In roots, Cd(2+) and Zn(2+) induce preferentially homophytochelatin (hPC) synthesis whereas Cu(2+) has a major effect on phytochelatin (PC) synthesis.</text>
</comment>
<comment type="miscellaneous">
    <text>Homoglutathione (hGSH) is a good acceptor, but a poor donor, of gamma-glutamylcysteine units.</text>
</comment>
<comment type="similarity">
    <text evidence="1">Belongs to the phytochelatin synthase family.</text>
</comment>
<gene>
    <name type="primary">PCS1</name>
</gene>
<keyword id="KW-0012">Acyltransferase</keyword>
<keyword id="KW-0104">Cadmium</keyword>
<keyword id="KW-0186">Copper</keyword>
<keyword id="KW-0408">Iron</keyword>
<keyword id="KW-0479">Metal-binding</keyword>
<keyword id="KW-0808">Transferase</keyword>
<keyword id="KW-0862">Zinc</keyword>
<organism>
    <name type="scientific">Lotus japonicus</name>
    <name type="common">Lotus corniculatus var. japonicus</name>
    <dbReference type="NCBI Taxonomy" id="34305"/>
    <lineage>
        <taxon>Eukaryota</taxon>
        <taxon>Viridiplantae</taxon>
        <taxon>Streptophyta</taxon>
        <taxon>Embryophyta</taxon>
        <taxon>Tracheophyta</taxon>
        <taxon>Spermatophyta</taxon>
        <taxon>Magnoliopsida</taxon>
        <taxon>eudicotyledons</taxon>
        <taxon>Gunneridae</taxon>
        <taxon>Pentapetalae</taxon>
        <taxon>rosids</taxon>
        <taxon>fabids</taxon>
        <taxon>Fabales</taxon>
        <taxon>Fabaceae</taxon>
        <taxon>Papilionoideae</taxon>
        <taxon>50 kb inversion clade</taxon>
        <taxon>NPAAA clade</taxon>
        <taxon>Hologalegina</taxon>
        <taxon>robinioid clade</taxon>
        <taxon>Loteae</taxon>
        <taxon>Lotus</taxon>
    </lineage>
</organism>